<sequence length="1087" mass="99401">APDPGPGPMGMMGARGPPGPPGKSGEDGNNGRPGKPGDRGAPGPQGARGFPGTPGLPGMKGHRGYTGLDGRKGEPGGAGAKGEPGAHGAAGSPGLAGSRGRAGPAGPAGARAGPLGAAGPPGFPGGPGPKGELGPAGATGPSGAQGSRGEPGPNGAVGPVGPPGNPGNNGLNGAKGAAGTPGVAGAPGFPGPRGGPGPQGPQGAAGQRGLAGDPGTQGVKGDGGPKGEPGNSGPQGSPGPQGEEGKRGPTGELGATGPAGNRGARGMPGSEGRGASGAAGPRGPPGDAGRAGESGPAGLRGLPGSPGSSGPPGKEGPAGPSGQDGRGGPPGPTGPRGQPGNLGFPGPKGPGGEAGKPGDKGATGPTGLRGPPGPDGNNGATGATGPAGGPGEKGEQGAAGAPGFQGLPGPAGGAGEAGKPGDRGLPGDQGVSGPAGAKGERGNPGAAGASGPQGPLGPRGPAGAPGTDGGKGEPGAAGAAGGPGHQGPGGMPGERGAAGAPGGKGEKGEAGHRGPDGNAGRDGSRGMPGPAGPPGPTGANGDKGSFGPAGPAGARGEVGPAGAPGFAGPPGADGQTGARPAGPAGQSGPPGASGPAGPTGARGDXGPPGLTGFPGAAGRVGAAGPAGLVGPPGSAGPAGKDGPRGLRGDPGPSGPSGDQGMVGPPGPSGEKGPSGEPGPAGSPGTPGTSGPLGLQGFVGLPGARGDRGSPGGAGAVGEPGRVGPAGPAGARGAPGNLGLPGMTGPQGEAGREGNPGNDGPPGRPGAPGFKGDRGEPGSSGAMGLAGAPGPAGPSGGAGRGNRGESGPGGAAGAVGPAGARGAAGPSGPRGEKGVAGEKGERGLRGHAGLQGMPGPSGPSGDTGSAGPNGPAGPRGPAGPHGPPGKDGRAGGHGTLGAPGARGPPGYVGPAGPPGSPGLPGPPGPAGGGYDVSGYDEYRAAKDYEVDATLKSLNTQLENLLTPEGSRKLSHPEWSSGFYWLDPNQGCSNDALKVFCDFTTRETCLHAHPGSLARNSNAYMSDETGDLKRAVVVQGSNDVELRFTFSVLEDGCTRTNKPSRLPLLDLAPLDLGGADQEFGLDLGPVCFK</sequence>
<organism evidence="3">
    <name type="scientific">Epinephelus costae</name>
    <name type="common">Goldblotch grouper</name>
    <name type="synonym">Serranus costae</name>
    <dbReference type="NCBI Taxonomy" id="309632"/>
    <lineage>
        <taxon>Eukaryota</taxon>
        <taxon>Metazoa</taxon>
        <taxon>Chordata</taxon>
        <taxon>Craniata</taxon>
        <taxon>Vertebrata</taxon>
        <taxon>Euteleostomi</taxon>
        <taxon>Actinopterygii</taxon>
        <taxon>Neopterygii</taxon>
        <taxon>Teleostei</taxon>
        <taxon>Neoteleostei</taxon>
        <taxon>Acanthomorphata</taxon>
        <taxon>Eupercaria</taxon>
        <taxon>Perciformes</taxon>
        <taxon>Serranoidei</taxon>
        <taxon>Serranidae</taxon>
        <taxon>Epinephelinae</taxon>
        <taxon>Epinephelini</taxon>
        <taxon>Epinephelus</taxon>
    </lineage>
</organism>
<dbReference type="GO" id="GO:0005581">
    <property type="term" value="C:collagen trimer"/>
    <property type="evidence" value="ECO:0007669"/>
    <property type="project" value="UniProtKB-KW"/>
</dbReference>
<dbReference type="GO" id="GO:0005576">
    <property type="term" value="C:extracellular region"/>
    <property type="evidence" value="ECO:0007669"/>
    <property type="project" value="UniProtKB-KW"/>
</dbReference>
<dbReference type="GO" id="GO:0005201">
    <property type="term" value="F:extracellular matrix structural constituent"/>
    <property type="evidence" value="ECO:0007669"/>
    <property type="project" value="InterPro"/>
</dbReference>
<dbReference type="Gene3D" id="2.60.120.1000">
    <property type="match status" value="2"/>
</dbReference>
<dbReference type="InterPro" id="IPR008160">
    <property type="entry name" value="Collagen"/>
</dbReference>
<dbReference type="InterPro" id="IPR050938">
    <property type="entry name" value="Collagen_Structural_Proteins"/>
</dbReference>
<dbReference type="InterPro" id="IPR000885">
    <property type="entry name" value="Fib_collagen_C"/>
</dbReference>
<dbReference type="PANTHER" id="PTHR37456:SF6">
    <property type="entry name" value="COLLAGEN ALPHA-1(XXIII) CHAIN-LIKE ISOFORM X2"/>
    <property type="match status" value="1"/>
</dbReference>
<dbReference type="PANTHER" id="PTHR37456">
    <property type="entry name" value="SI:CH211-266K2.1"/>
    <property type="match status" value="1"/>
</dbReference>
<dbReference type="Pfam" id="PF01410">
    <property type="entry name" value="COLFI"/>
    <property type="match status" value="1"/>
</dbReference>
<dbReference type="Pfam" id="PF01391">
    <property type="entry name" value="Collagen"/>
    <property type="match status" value="7"/>
</dbReference>
<dbReference type="SMART" id="SM00038">
    <property type="entry name" value="COLFI"/>
    <property type="match status" value="1"/>
</dbReference>
<dbReference type="PROSITE" id="PS51461">
    <property type="entry name" value="NC1_FIB"/>
    <property type="match status" value="1"/>
</dbReference>
<proteinExistence type="evidence at protein level"/>
<protein>
    <recommendedName>
        <fullName evidence="4">Collagen alpha-2(I) chain</fullName>
        <shortName evidence="4">col1a2</shortName>
    </recommendedName>
    <alternativeName>
        <fullName evidence="4">Alpha-2 type I collagen</fullName>
    </alternativeName>
</protein>
<comment type="subcellular location">
    <subcellularLocation>
        <location evidence="1">Secreted</location>
        <location evidence="1">Extracellular space</location>
        <location evidence="1">Extracellular matrix</location>
    </subcellularLocation>
</comment>
<comment type="similarity">
    <text evidence="1">Belongs to the fibrillar collagen family.</text>
</comment>
<evidence type="ECO:0000255" key="1">
    <source>
        <dbReference type="PROSITE-ProRule" id="PRU00793"/>
    </source>
</evidence>
<evidence type="ECO:0000256" key="2">
    <source>
        <dbReference type="SAM" id="MobiDB-lite"/>
    </source>
</evidence>
<evidence type="ECO:0000303" key="3">
    <source ref="1"/>
</evidence>
<evidence type="ECO:0000305" key="4"/>
<feature type="chain" id="PRO_0000459602" description="Collagen alpha-2(I) chain">
    <location>
        <begin position="1"/>
        <end position="1087"/>
    </location>
</feature>
<feature type="domain" description="Fibrillar collagen NC1" evidence="1">
    <location>
        <begin position="929"/>
        <end position="1087"/>
    </location>
</feature>
<feature type="region of interest" description="Disordered" evidence="2">
    <location>
        <begin position="1"/>
        <end position="931"/>
    </location>
</feature>
<feature type="compositionally biased region" description="Low complexity" evidence="2">
    <location>
        <begin position="83"/>
        <end position="120"/>
    </location>
</feature>
<feature type="compositionally biased region" description="Low complexity" evidence="2">
    <location>
        <begin position="150"/>
        <end position="159"/>
    </location>
</feature>
<feature type="compositionally biased region" description="Low complexity" evidence="2">
    <location>
        <begin position="166"/>
        <end position="187"/>
    </location>
</feature>
<feature type="compositionally biased region" description="Pro residues" evidence="2">
    <location>
        <begin position="189"/>
        <end position="199"/>
    </location>
</feature>
<feature type="compositionally biased region" description="Low complexity" evidence="2">
    <location>
        <begin position="201"/>
        <end position="211"/>
    </location>
</feature>
<feature type="compositionally biased region" description="Gly residues" evidence="2">
    <location>
        <begin position="218"/>
        <end position="227"/>
    </location>
</feature>
<feature type="compositionally biased region" description="Low complexity" evidence="2">
    <location>
        <begin position="228"/>
        <end position="241"/>
    </location>
</feature>
<feature type="compositionally biased region" description="Low complexity" evidence="2">
    <location>
        <begin position="278"/>
        <end position="321"/>
    </location>
</feature>
<feature type="compositionally biased region" description="Low complexity" evidence="2">
    <location>
        <begin position="335"/>
        <end position="345"/>
    </location>
</feature>
<feature type="compositionally biased region" description="Low complexity" evidence="2">
    <location>
        <begin position="360"/>
        <end position="384"/>
    </location>
</feature>
<feature type="compositionally biased region" description="Low complexity" evidence="2">
    <location>
        <begin position="396"/>
        <end position="408"/>
    </location>
</feature>
<feature type="compositionally biased region" description="Gly residues" evidence="2">
    <location>
        <begin position="409"/>
        <end position="418"/>
    </location>
</feature>
<feature type="compositionally biased region" description="Low complexity" evidence="2">
    <location>
        <begin position="443"/>
        <end position="453"/>
    </location>
</feature>
<feature type="compositionally biased region" description="Gly residues" evidence="2">
    <location>
        <begin position="466"/>
        <end position="493"/>
    </location>
</feature>
<feature type="compositionally biased region" description="Basic and acidic residues" evidence="2">
    <location>
        <begin position="504"/>
        <end position="515"/>
    </location>
</feature>
<feature type="compositionally biased region" description="Low complexity" evidence="2">
    <location>
        <begin position="560"/>
        <end position="602"/>
    </location>
</feature>
<feature type="compositionally biased region" description="Low complexity" evidence="2">
    <location>
        <begin position="613"/>
        <end position="640"/>
    </location>
</feature>
<feature type="compositionally biased region" description="Low complexity" evidence="2">
    <location>
        <begin position="677"/>
        <end position="695"/>
    </location>
</feature>
<feature type="compositionally biased region" description="Gly residues" evidence="2">
    <location>
        <begin position="708"/>
        <end position="717"/>
    </location>
</feature>
<feature type="compositionally biased region" description="Low complexity" evidence="2">
    <location>
        <begin position="718"/>
        <end position="740"/>
    </location>
</feature>
<feature type="compositionally biased region" description="Low complexity" evidence="2">
    <location>
        <begin position="776"/>
        <end position="788"/>
    </location>
</feature>
<feature type="compositionally biased region" description="Gly residues" evidence="2">
    <location>
        <begin position="792"/>
        <end position="812"/>
    </location>
</feature>
<feature type="compositionally biased region" description="Low complexity" evidence="2">
    <location>
        <begin position="813"/>
        <end position="828"/>
    </location>
</feature>
<feature type="compositionally biased region" description="Basic and acidic residues" evidence="2">
    <location>
        <begin position="829"/>
        <end position="843"/>
    </location>
</feature>
<feature type="compositionally biased region" description="Low complexity" evidence="2">
    <location>
        <begin position="849"/>
        <end position="868"/>
    </location>
</feature>
<feature type="compositionally biased region" description="Low complexity" evidence="2">
    <location>
        <begin position="897"/>
        <end position="909"/>
    </location>
</feature>
<feature type="compositionally biased region" description="Pro residues" evidence="2">
    <location>
        <begin position="910"/>
        <end position="924"/>
    </location>
</feature>
<feature type="disulfide bond" description="Interchain" evidence="1">
    <location>
        <position position="986"/>
    </location>
</feature>
<feature type="disulfide bond" description="Interchain" evidence="1">
    <location>
        <position position="995"/>
    </location>
</feature>
<feature type="non-consecutive residues" evidence="3">
    <location>
        <begin position="15"/>
        <end position="16"/>
    </location>
</feature>
<feature type="non-consecutive residues" evidence="3">
    <location>
        <begin position="99"/>
        <end position="100"/>
    </location>
</feature>
<feature type="non-consecutive residues" evidence="3">
    <location>
        <begin position="111"/>
        <end position="112"/>
    </location>
</feature>
<feature type="non-consecutive residues" evidence="3">
    <location>
        <begin position="265"/>
        <end position="266"/>
    </location>
</feature>
<feature type="non-consecutive residues" evidence="3">
    <location>
        <begin position="273"/>
        <end position="274"/>
    </location>
</feature>
<feature type="non-consecutive residues" evidence="3">
    <location>
        <begin position="543"/>
        <end position="544"/>
    </location>
</feature>
<feature type="non-consecutive residues" evidence="3">
    <location>
        <begin position="555"/>
        <end position="556"/>
    </location>
</feature>
<feature type="non-consecutive residues" evidence="3">
    <location>
        <begin position="579"/>
        <end position="580"/>
    </location>
</feature>
<feature type="non-consecutive residues" evidence="3">
    <location>
        <begin position="799"/>
        <end position="800"/>
    </location>
</feature>
<feature type="non-consecutive residues" evidence="3">
    <location>
        <begin position="841"/>
        <end position="842"/>
    </location>
</feature>
<feature type="non-consecutive residues" evidence="3">
    <location>
        <begin position="939"/>
        <end position="940"/>
    </location>
</feature>
<feature type="non-consecutive residues" evidence="3">
    <location>
        <begin position="967"/>
        <end position="968"/>
    </location>
</feature>
<feature type="non-consecutive residues" evidence="3">
    <location>
        <begin position="1013"/>
        <end position="1014"/>
    </location>
</feature>
<feature type="non-consecutive residues" evidence="3">
    <location>
        <begin position="1042"/>
        <end position="1043"/>
    </location>
</feature>
<feature type="non-consecutive residues" evidence="3">
    <location>
        <begin position="1053"/>
        <end position="1054"/>
    </location>
</feature>
<feature type="non-terminal residue" evidence="3">
    <location>
        <position position="1"/>
    </location>
</feature>
<name>CO1A2_EPICS</name>
<keyword id="KW-0176">Collagen</keyword>
<keyword id="KW-0903">Direct protein sequencing</keyword>
<keyword id="KW-1015">Disulfide bond</keyword>
<keyword id="KW-0272">Extracellular matrix</keyword>
<keyword id="KW-0964">Secreted</keyword>
<reference evidence="4" key="1">
    <citation type="submission" date="2023-05" db="UniProtKB">
        <title>Grouping groupers in the Mediterranean: ecological baselines revealed by ancient proteins.</title>
        <authorList>
            <person name="Winter R.M."/>
            <person name="de Kock W."/>
            <person name="Mackie M."/>
            <person name="Ramsoe M."/>
            <person name="Desidera E."/>
            <person name="Collins M."/>
            <person name="Guidetti P."/>
            <person name="Presslee S."/>
            <person name="Munoz-Alegre M."/>
            <person name="Oueslati T."/>
            <person name="Morales-Muniz A."/>
            <person name="Michailidis D."/>
            <person name="van den Hurk Y."/>
            <person name="Taurozzi A.J."/>
            <person name="Cakirlar C."/>
        </authorList>
    </citation>
    <scope>PROTEIN SEQUENCE</scope>
    <scope>IDENTIFICATION BY MASS SPECTROMETRY</scope>
    <source>
        <tissue evidence="3">Bone</tissue>
    </source>
</reference>
<accession>C0HM88</accession>